<comment type="function">
    <text evidence="1 2">Catalyzes the initial step in triglyceride hydrolysis in adipocyte and non-adipocyte lipid droplets (By similarity). Exhibits a strong preference for the hydrolysis of long-chain fatty acid esters at the sn-2 position of the glycerol backbone and acts coordinately with LIPE/HLS and DGAT2 within the lipolytic cascade (By similarity). Also possesses acylglycerol transacylase and phospholipase A2 activities (By similarity). Transfers fatty acid from triglyceride to retinol, hydrolyzes retinylesters, and generates 1,3-diacylglycerol from triglycerides (By similarity). Regulates adiposome size and may be involved in the degradation of adiposomes (By similarity). Catalyzes the formation of an ester bond between hydroxy fatty acids and fatty acids derived from triglycerides or diglycerides to generate fatty acid esters of hydroxy fatty acids (FAHFAs) in adipocytes (By similarity). Acts antagonistically with LDAH in regulation of cellular lipid stores (By similarity). Inhibits LDAH-stimulated lipid droplet fusion (By similarity). May play an important role in energy homeostasis (By similarity). May play a role in the response of the organism to starvation, enhancing hydrolysis of triglycerides and providing free fatty acids to other tissues to be oxidized in situations of energy depletion (By similarity).</text>
</comment>
<comment type="catalytic activity">
    <reaction evidence="2">
        <text>a triacylglycerol + H2O = a diacylglycerol + a fatty acid + H(+)</text>
        <dbReference type="Rhea" id="RHEA:12044"/>
        <dbReference type="ChEBI" id="CHEBI:15377"/>
        <dbReference type="ChEBI" id="CHEBI:15378"/>
        <dbReference type="ChEBI" id="CHEBI:17855"/>
        <dbReference type="ChEBI" id="CHEBI:18035"/>
        <dbReference type="ChEBI" id="CHEBI:28868"/>
        <dbReference type="EC" id="3.1.1.3"/>
    </reaction>
    <physiologicalReaction direction="left-to-right" evidence="2">
        <dbReference type="Rhea" id="RHEA:12045"/>
    </physiologicalReaction>
</comment>
<comment type="catalytic activity">
    <reaction evidence="2">
        <text>a triacylglycerol + H2O = a 1,2-diacylglycerol + a fatty acid + H(+)</text>
        <dbReference type="Rhea" id="RHEA:35667"/>
        <dbReference type="ChEBI" id="CHEBI:15377"/>
        <dbReference type="ChEBI" id="CHEBI:15378"/>
        <dbReference type="ChEBI" id="CHEBI:17855"/>
        <dbReference type="ChEBI" id="CHEBI:28868"/>
        <dbReference type="ChEBI" id="CHEBI:49172"/>
    </reaction>
    <physiologicalReaction direction="left-to-right" evidence="2">
        <dbReference type="Rhea" id="RHEA:35668"/>
    </physiologicalReaction>
</comment>
<comment type="catalytic activity">
    <reaction evidence="2">
        <text>a triacylglycerol + H2O = a 1,3-diacylglycerol + a fatty acid + H(+)</text>
        <dbReference type="Rhea" id="RHEA:38495"/>
        <dbReference type="ChEBI" id="CHEBI:15377"/>
        <dbReference type="ChEBI" id="CHEBI:15378"/>
        <dbReference type="ChEBI" id="CHEBI:17855"/>
        <dbReference type="ChEBI" id="CHEBI:28868"/>
        <dbReference type="ChEBI" id="CHEBI:47777"/>
    </reaction>
    <physiologicalReaction direction="left-to-right" evidence="2">
        <dbReference type="Rhea" id="RHEA:38496"/>
    </physiologicalReaction>
</comment>
<comment type="catalytic activity">
    <reaction evidence="1">
        <text>a triacyl-sn-glycerol + H2O = a 1,3-diacyl-sn-glycerol + a fatty acid + H(+)</text>
        <dbReference type="Rhea" id="RHEA:43732"/>
        <dbReference type="ChEBI" id="CHEBI:15377"/>
        <dbReference type="ChEBI" id="CHEBI:15378"/>
        <dbReference type="ChEBI" id="CHEBI:28868"/>
        <dbReference type="ChEBI" id="CHEBI:64615"/>
        <dbReference type="ChEBI" id="CHEBI:77272"/>
    </reaction>
    <physiologicalReaction direction="left-to-right" evidence="1">
        <dbReference type="Rhea" id="RHEA:43733"/>
    </physiologicalReaction>
</comment>
<comment type="catalytic activity">
    <reaction evidence="1">
        <text>a triacyl-sn-glycerol + H2O = a 2,3-diacyl-sn-glycerol + a fatty acid + H(+)</text>
        <dbReference type="Rhea" id="RHEA:38499"/>
        <dbReference type="ChEBI" id="CHEBI:15377"/>
        <dbReference type="ChEBI" id="CHEBI:15378"/>
        <dbReference type="ChEBI" id="CHEBI:28868"/>
        <dbReference type="ChEBI" id="CHEBI:64615"/>
        <dbReference type="ChEBI" id="CHEBI:75524"/>
    </reaction>
    <physiologicalReaction direction="left-to-right" evidence="1">
        <dbReference type="Rhea" id="RHEA:38500"/>
    </physiologicalReaction>
</comment>
<comment type="catalytic activity">
    <reaction evidence="2">
        <text>a 1-acylglycerol + a 1,3-diacylglycerol = a triacylglycerol + glycerol</text>
        <dbReference type="Rhea" id="RHEA:44440"/>
        <dbReference type="ChEBI" id="CHEBI:17754"/>
        <dbReference type="ChEBI" id="CHEBI:17855"/>
        <dbReference type="ChEBI" id="CHEBI:35759"/>
        <dbReference type="ChEBI" id="CHEBI:47777"/>
    </reaction>
    <physiologicalReaction direction="left-to-right" evidence="2">
        <dbReference type="Rhea" id="RHEA:44441"/>
    </physiologicalReaction>
</comment>
<comment type="catalytic activity">
    <reaction evidence="2">
        <text>a 1-acylglycerol + a 1,2-diacylglycerol = a triacylglycerol + glycerol</text>
        <dbReference type="Rhea" id="RHEA:44436"/>
        <dbReference type="ChEBI" id="CHEBI:17754"/>
        <dbReference type="ChEBI" id="CHEBI:17855"/>
        <dbReference type="ChEBI" id="CHEBI:35759"/>
        <dbReference type="ChEBI" id="CHEBI:49172"/>
    </reaction>
    <physiologicalReaction direction="left-to-right" evidence="2">
        <dbReference type="Rhea" id="RHEA:44437"/>
    </physiologicalReaction>
</comment>
<comment type="catalytic activity">
    <reaction evidence="2">
        <text>2 a 1-acylglycerol = a 1,2-diacylglycerol + glycerol</text>
        <dbReference type="Rhea" id="RHEA:44432"/>
        <dbReference type="ChEBI" id="CHEBI:17754"/>
        <dbReference type="ChEBI" id="CHEBI:35759"/>
        <dbReference type="ChEBI" id="CHEBI:49172"/>
    </reaction>
    <physiologicalReaction direction="left-to-right" evidence="2">
        <dbReference type="Rhea" id="RHEA:44433"/>
    </physiologicalReaction>
</comment>
<comment type="catalytic activity">
    <reaction evidence="2">
        <text>a triacylglycerol + all-trans-retinol = an all-trans-retinyl ester + a diacylglycerol</text>
        <dbReference type="Rhea" id="RHEA:44676"/>
        <dbReference type="ChEBI" id="CHEBI:17336"/>
        <dbReference type="ChEBI" id="CHEBI:17855"/>
        <dbReference type="ChEBI" id="CHEBI:18035"/>
        <dbReference type="ChEBI" id="CHEBI:63410"/>
    </reaction>
    <physiologicalReaction direction="left-to-right" evidence="2">
        <dbReference type="Rhea" id="RHEA:44677"/>
    </physiologicalReaction>
</comment>
<comment type="catalytic activity">
    <reaction evidence="2">
        <text>1,2-di-(9Z-octadecenoyl)-glycerol + (9Z)-octadecenoate + H(+) = 1,2,3-tri-(9Z-octadecenoyl)-glycerol + H2O</text>
        <dbReference type="Rhea" id="RHEA:38379"/>
        <dbReference type="ChEBI" id="CHEBI:15377"/>
        <dbReference type="ChEBI" id="CHEBI:15378"/>
        <dbReference type="ChEBI" id="CHEBI:30823"/>
        <dbReference type="ChEBI" id="CHEBI:52323"/>
        <dbReference type="ChEBI" id="CHEBI:53753"/>
    </reaction>
    <physiologicalReaction direction="right-to-left" evidence="2">
        <dbReference type="Rhea" id="RHEA:38381"/>
    </physiologicalReaction>
</comment>
<comment type="catalytic activity">
    <reaction evidence="2">
        <text>1,2,3-tri-(9Z-octadecenoyl)-glycerol + H2O = 1,3-di-(9Z-octadecenoyl)-glycerol + (9Z)-octadecenoate + H(+)</text>
        <dbReference type="Rhea" id="RHEA:38387"/>
        <dbReference type="ChEBI" id="CHEBI:15377"/>
        <dbReference type="ChEBI" id="CHEBI:15378"/>
        <dbReference type="ChEBI" id="CHEBI:30823"/>
        <dbReference type="ChEBI" id="CHEBI:53753"/>
        <dbReference type="ChEBI" id="CHEBI:75735"/>
    </reaction>
    <physiologicalReaction direction="left-to-right" evidence="2">
        <dbReference type="Rhea" id="RHEA:38388"/>
    </physiologicalReaction>
</comment>
<comment type="catalytic activity">
    <reaction evidence="2">
        <text>1-(9Z-octadecenoyl)-glycerol + 1,3-di-(9Z-octadecenoyl)-glycerol = 1,2,3-tri-(9Z-octadecenoyl)-glycerol + glycerol</text>
        <dbReference type="Rhea" id="RHEA:38331"/>
        <dbReference type="ChEBI" id="CHEBI:17754"/>
        <dbReference type="ChEBI" id="CHEBI:53753"/>
        <dbReference type="ChEBI" id="CHEBI:75342"/>
        <dbReference type="ChEBI" id="CHEBI:75735"/>
    </reaction>
    <physiologicalReaction direction="left-to-right" evidence="2">
        <dbReference type="Rhea" id="RHEA:38332"/>
    </physiologicalReaction>
</comment>
<comment type="catalytic activity">
    <reaction evidence="2">
        <text>1-(9Z-octadecenoyl)-glycerol + 1,2-di-(9Z-octadecenoyl)-glycerol = 1,2,3-tri-(9Z-octadecenoyl)-glycerol + glycerol</text>
        <dbReference type="Rhea" id="RHEA:38327"/>
        <dbReference type="ChEBI" id="CHEBI:17754"/>
        <dbReference type="ChEBI" id="CHEBI:52323"/>
        <dbReference type="ChEBI" id="CHEBI:53753"/>
        <dbReference type="ChEBI" id="CHEBI:75342"/>
    </reaction>
    <physiologicalReaction direction="left-to-right" evidence="2">
        <dbReference type="Rhea" id="RHEA:38328"/>
    </physiologicalReaction>
</comment>
<comment type="catalytic activity">
    <reaction evidence="2">
        <text>2 1-(9Z-octadecenoyl)-glycerol = 1,2-di-(9Z-octadecenoyl)-glycerol + glycerol</text>
        <dbReference type="Rhea" id="RHEA:38323"/>
        <dbReference type="ChEBI" id="CHEBI:17754"/>
        <dbReference type="ChEBI" id="CHEBI:52323"/>
        <dbReference type="ChEBI" id="CHEBI:75342"/>
    </reaction>
    <physiologicalReaction direction="left-to-right" evidence="2">
        <dbReference type="Rhea" id="RHEA:38324"/>
    </physiologicalReaction>
</comment>
<comment type="catalytic activity">
    <reaction evidence="2">
        <text>1,2,3-tri-(9Z-octadecenoyl)-glycerol + all-trans-retinol = all-trans-retinyl 9Z-octadecenoate + di-(9Z)-octadecenoylglycerol</text>
        <dbReference type="Rhea" id="RHEA:39987"/>
        <dbReference type="ChEBI" id="CHEBI:17336"/>
        <dbReference type="ChEBI" id="CHEBI:53753"/>
        <dbReference type="ChEBI" id="CHEBI:70760"/>
        <dbReference type="ChEBI" id="CHEBI:75945"/>
    </reaction>
    <physiologicalReaction direction="left-to-right" evidence="2">
        <dbReference type="Rhea" id="RHEA:39988"/>
    </physiologicalReaction>
</comment>
<comment type="catalytic activity">
    <reaction evidence="1">
        <text>1,2,3-tri-(9Z)-hexadecenoylglycerol + H2O = 1,3-di-(9Z)-hexadecenoylglycerol + (9Z)-hexadecenoate + H(+)</text>
        <dbReference type="Rhea" id="RHEA:38395"/>
        <dbReference type="ChEBI" id="CHEBI:15377"/>
        <dbReference type="ChEBI" id="CHEBI:15378"/>
        <dbReference type="ChEBI" id="CHEBI:32372"/>
        <dbReference type="ChEBI" id="CHEBI:75841"/>
        <dbReference type="ChEBI" id="CHEBI:75849"/>
    </reaction>
    <physiologicalReaction direction="left-to-right" evidence="1">
        <dbReference type="Rhea" id="RHEA:38396"/>
    </physiologicalReaction>
</comment>
<comment type="catalytic activity">
    <reaction evidence="1">
        <text>1,2,3-tri-(9Z,12Z)-octadecadienoylglycerol + H2O = 1,3-di-(9Z,12Z)-octadecadienoylglycerol + (9Z,12Z)-octadecadienoate + H(+)</text>
        <dbReference type="Rhea" id="RHEA:38403"/>
        <dbReference type="ChEBI" id="CHEBI:15377"/>
        <dbReference type="ChEBI" id="CHEBI:15378"/>
        <dbReference type="ChEBI" id="CHEBI:30245"/>
        <dbReference type="ChEBI" id="CHEBI:75844"/>
        <dbReference type="ChEBI" id="CHEBI:75850"/>
    </reaction>
    <physiologicalReaction direction="left-to-right" evidence="1">
        <dbReference type="Rhea" id="RHEA:38404"/>
    </physiologicalReaction>
</comment>
<comment type="catalytic activity">
    <reaction evidence="1">
        <text>1,2,3-tri-(9Z,12Z,15Z)-octadecatrienoylglycerol + H2O = 1,3-di-(9Z,12Z,15Z)-octadecatrienoylglycerol + (9Z,12Z,15Z)-octadecatrienoate + H(+)</text>
        <dbReference type="Rhea" id="RHEA:38411"/>
        <dbReference type="ChEBI" id="CHEBI:15377"/>
        <dbReference type="ChEBI" id="CHEBI:15378"/>
        <dbReference type="ChEBI" id="CHEBI:32387"/>
        <dbReference type="ChEBI" id="CHEBI:75845"/>
        <dbReference type="ChEBI" id="CHEBI:75852"/>
    </reaction>
    <physiologicalReaction direction="left-to-right" evidence="1">
        <dbReference type="Rhea" id="RHEA:38412"/>
    </physiologicalReaction>
</comment>
<comment type="catalytic activity">
    <reaction evidence="1">
        <text>1,3-di-(9Z)-octadecenoyl-2-hexadecanoylglycerol + H2O = 1,3-di-(9Z-octadecenoyl)-glycerol + hexadecanoate + H(+)</text>
        <dbReference type="Rhea" id="RHEA:38419"/>
        <dbReference type="ChEBI" id="CHEBI:7896"/>
        <dbReference type="ChEBI" id="CHEBI:15377"/>
        <dbReference type="ChEBI" id="CHEBI:15378"/>
        <dbReference type="ChEBI" id="CHEBI:75735"/>
        <dbReference type="ChEBI" id="CHEBI:75846"/>
    </reaction>
    <physiologicalReaction direction="left-to-right" evidence="1">
        <dbReference type="Rhea" id="RHEA:38420"/>
    </physiologicalReaction>
</comment>
<comment type="catalytic activity">
    <reaction evidence="1">
        <text>1,2-di-(9Z)-octadecenoyl-3-hexadecanoyl-sn-glycerol + H2O = 1-(9Z)-octadecenoyl-3-hexadecanoyl-sn-glycerol + (9Z)-octadecenoate + H(+)</text>
        <dbReference type="Rhea" id="RHEA:38423"/>
        <dbReference type="ChEBI" id="CHEBI:15377"/>
        <dbReference type="ChEBI" id="CHEBI:15378"/>
        <dbReference type="ChEBI" id="CHEBI:30823"/>
        <dbReference type="ChEBI" id="CHEBI:75583"/>
        <dbReference type="ChEBI" id="CHEBI:75867"/>
    </reaction>
    <physiologicalReaction direction="left-to-right" evidence="1">
        <dbReference type="Rhea" id="RHEA:38424"/>
    </physiologicalReaction>
</comment>
<comment type="catalytic activity">
    <reaction evidence="1">
        <text>1-hexadecanoyl-2,3-di-(9Z)-octadecenoyl-sn-glycerol + H2O = 1-hexadecanoyl-3-(9Z)-octadecenoyl-sn-glycerol + (9Z)-octadecenoate + H(+)</text>
        <dbReference type="Rhea" id="RHEA:38647"/>
        <dbReference type="ChEBI" id="CHEBI:15377"/>
        <dbReference type="ChEBI" id="CHEBI:15378"/>
        <dbReference type="ChEBI" id="CHEBI:30823"/>
        <dbReference type="ChEBI" id="CHEBI:75847"/>
        <dbReference type="ChEBI" id="CHEBI:75868"/>
    </reaction>
    <physiologicalReaction direction="left-to-right" evidence="1">
        <dbReference type="Rhea" id="RHEA:38648"/>
    </physiologicalReaction>
</comment>
<comment type="catalytic activity">
    <reaction evidence="1">
        <text>1,2,3-tri-(9Z-octadecenoyl)-glycerol + H2O = 2,3-di-(9Z)-octadecenoyl-sn-glycerol + (9Z)-octadecenoate + H(+)</text>
        <dbReference type="Rhea" id="RHEA:38391"/>
        <dbReference type="ChEBI" id="CHEBI:15377"/>
        <dbReference type="ChEBI" id="CHEBI:15378"/>
        <dbReference type="ChEBI" id="CHEBI:30823"/>
        <dbReference type="ChEBI" id="CHEBI:53753"/>
        <dbReference type="ChEBI" id="CHEBI:75824"/>
    </reaction>
    <physiologicalReaction direction="left-to-right" evidence="1">
        <dbReference type="Rhea" id="RHEA:38392"/>
    </physiologicalReaction>
</comment>
<comment type="catalytic activity">
    <reaction evidence="1">
        <text>1,2,3-tri-(9Z)-hexadecenoylglycerol + H2O = 2,3-di-(9Z)-hexadecenoyl-sn-glycerol + (9Z)-hexadecenoate + H(+)</text>
        <dbReference type="Rhea" id="RHEA:38399"/>
        <dbReference type="ChEBI" id="CHEBI:15377"/>
        <dbReference type="ChEBI" id="CHEBI:15378"/>
        <dbReference type="ChEBI" id="CHEBI:32372"/>
        <dbReference type="ChEBI" id="CHEBI:75841"/>
        <dbReference type="ChEBI" id="CHEBI:75853"/>
    </reaction>
    <physiologicalReaction direction="left-to-right" evidence="1">
        <dbReference type="Rhea" id="RHEA:38400"/>
    </physiologicalReaction>
</comment>
<comment type="catalytic activity">
    <reaction evidence="1">
        <text>1,2,3-tri-(9Z,12Z)-octadecadienoylglycerol + H2O = 2,3-di-(9Z,12Z)-octadecadienoyl-sn-glycerol + (9Z,12Z)-octadecadienoate + H(+)</text>
        <dbReference type="Rhea" id="RHEA:38407"/>
        <dbReference type="ChEBI" id="CHEBI:15377"/>
        <dbReference type="ChEBI" id="CHEBI:15378"/>
        <dbReference type="ChEBI" id="CHEBI:30245"/>
        <dbReference type="ChEBI" id="CHEBI:75844"/>
        <dbReference type="ChEBI" id="CHEBI:75854"/>
    </reaction>
    <physiologicalReaction direction="left-to-right" evidence="1">
        <dbReference type="Rhea" id="RHEA:38408"/>
    </physiologicalReaction>
</comment>
<comment type="catalytic activity">
    <reaction evidence="1">
        <text>1,2,3-tri-(9Z,12Z,15Z)-octadecatrienoylglycerol + H2O = 2,3-di-(9Z,12Z,15Z)-octadecatrienoyl-sn-glycerol + (9Z,12Z,15Z)-octadecatrienoate + H(+)</text>
        <dbReference type="Rhea" id="RHEA:38415"/>
        <dbReference type="ChEBI" id="CHEBI:15377"/>
        <dbReference type="ChEBI" id="CHEBI:15378"/>
        <dbReference type="ChEBI" id="CHEBI:32387"/>
        <dbReference type="ChEBI" id="CHEBI:75845"/>
        <dbReference type="ChEBI" id="CHEBI:75855"/>
    </reaction>
    <physiologicalReaction direction="left-to-right" evidence="1">
        <dbReference type="Rhea" id="RHEA:38416"/>
    </physiologicalReaction>
</comment>
<comment type="catalytic activity">
    <reaction evidence="1">
        <text>1,3-di-(9Z)-octadecenoyl-2-hexadecanoylglycerol + H2O = 2-hexadecanoyl-3-(9Z)-octadecenoyl-sn-glycerol + (9Z)-octadecenoate + H(+)</text>
        <dbReference type="Rhea" id="RHEA:38431"/>
        <dbReference type="ChEBI" id="CHEBI:15377"/>
        <dbReference type="ChEBI" id="CHEBI:15378"/>
        <dbReference type="ChEBI" id="CHEBI:30823"/>
        <dbReference type="ChEBI" id="CHEBI:75846"/>
        <dbReference type="ChEBI" id="CHEBI:75870"/>
    </reaction>
    <physiologicalReaction direction="left-to-right" evidence="1">
        <dbReference type="Rhea" id="RHEA:38432"/>
    </physiologicalReaction>
</comment>
<comment type="catalytic activity">
    <reaction evidence="1">
        <text>1-hexadecanoyl-2,3-di-(9Z)-octadecenoyl-sn-glycerol + H2O = 2,3-di-(9Z)-octadecenoyl-sn-glycerol + hexadecanoate + H(+)</text>
        <dbReference type="Rhea" id="RHEA:38427"/>
        <dbReference type="ChEBI" id="CHEBI:7896"/>
        <dbReference type="ChEBI" id="CHEBI:15377"/>
        <dbReference type="ChEBI" id="CHEBI:15378"/>
        <dbReference type="ChEBI" id="CHEBI:75824"/>
        <dbReference type="ChEBI" id="CHEBI:75847"/>
    </reaction>
    <physiologicalReaction direction="left-to-right" evidence="1">
        <dbReference type="Rhea" id="RHEA:38428"/>
    </physiologicalReaction>
</comment>
<comment type="catalytic activity">
    <reaction evidence="1">
        <text>1,2-di-(9Z)-octadecenoyl-3-hexadecanoyl-sn-glycerol + H2O = 2-(9Z-octadecenoyl)-3-hexadecanoyl-sn-glycerol + (9Z)-octadecenoate + H(+)</text>
        <dbReference type="Rhea" id="RHEA:38643"/>
        <dbReference type="ChEBI" id="CHEBI:15377"/>
        <dbReference type="ChEBI" id="CHEBI:15378"/>
        <dbReference type="ChEBI" id="CHEBI:30823"/>
        <dbReference type="ChEBI" id="CHEBI:75546"/>
        <dbReference type="ChEBI" id="CHEBI:75583"/>
    </reaction>
    <physiologicalReaction direction="left-to-right" evidence="1">
        <dbReference type="Rhea" id="RHEA:38644"/>
    </physiologicalReaction>
</comment>
<comment type="catalytic activity">
    <reaction evidence="2">
        <text>a 1,2-diacyl-sn-glycero-3-phosphocholine + H2O = a 1-acyl-sn-glycero-3-phosphocholine + a fatty acid + H(+)</text>
        <dbReference type="Rhea" id="RHEA:15801"/>
        <dbReference type="ChEBI" id="CHEBI:15377"/>
        <dbReference type="ChEBI" id="CHEBI:15378"/>
        <dbReference type="ChEBI" id="CHEBI:28868"/>
        <dbReference type="ChEBI" id="CHEBI:57643"/>
        <dbReference type="ChEBI" id="CHEBI:58168"/>
        <dbReference type="EC" id="3.1.1.4"/>
    </reaction>
    <physiologicalReaction direction="left-to-right" evidence="2">
        <dbReference type="Rhea" id="RHEA:15802"/>
    </physiologicalReaction>
</comment>
<comment type="catalytic activity">
    <reaction evidence="2">
        <text>1,2,3-tri-(9Z-octadecenoyl)-glycerol + 9-hydroxy-octadecanoate = 9-(9Z-octadecenoyloxy)-octadecanoate + 2,3-di-(9Z)-octadecenoyl-sn-glycerol</text>
        <dbReference type="Rhea" id="RHEA:75011"/>
        <dbReference type="ChEBI" id="CHEBI:53753"/>
        <dbReference type="ChEBI" id="CHEBI:75824"/>
        <dbReference type="ChEBI" id="CHEBI:136282"/>
        <dbReference type="ChEBI" id="CHEBI:136286"/>
    </reaction>
</comment>
<comment type="catalytic activity">
    <reaction evidence="2">
        <text>1-hexadecanoyl-2,3-di-(9Z)-octadecenoyl-sn-glycerol + 9-hydroxy-octadecanoate = 9-hexadecanoyloxy-octadecanoate + 2,3-di-(9Z)-octadecenoyl-sn-glycerol</text>
        <dbReference type="Rhea" id="RHEA:75015"/>
        <dbReference type="ChEBI" id="CHEBI:75824"/>
        <dbReference type="ChEBI" id="CHEBI:75847"/>
        <dbReference type="ChEBI" id="CHEBI:83670"/>
        <dbReference type="ChEBI" id="CHEBI:136286"/>
    </reaction>
</comment>
<comment type="catalytic activity">
    <reaction evidence="2">
        <text>1,2,3-tri-(10Z)-heptadecenoylglycerol + 9-hydroxy-octadecanoate = 2,3-di-(10Z-heptadecenoyl)-sn-glycerol + 9-(10Z-heptadecenoyloxy)-octadecanoate</text>
        <dbReference type="Rhea" id="RHEA:75019"/>
        <dbReference type="ChEBI" id="CHEBI:136286"/>
        <dbReference type="ChEBI" id="CHEBI:194143"/>
        <dbReference type="ChEBI" id="CHEBI:194145"/>
        <dbReference type="ChEBI" id="CHEBI:228204"/>
    </reaction>
</comment>
<comment type="catalytic activity">
    <reaction evidence="2">
        <text>1,2,3-tri-(9Z,12Z)-octadecadienoylglycerol + 9-hydroxy-octadecanoate = 2,3-di-(9Z,12Z)-octadecadienoyl-sn-glycerol + 9-(9Z,12Z-octadecadienoyloxy)-octadecanoate</text>
        <dbReference type="Rhea" id="RHEA:75023"/>
        <dbReference type="ChEBI" id="CHEBI:75844"/>
        <dbReference type="ChEBI" id="CHEBI:75854"/>
        <dbReference type="ChEBI" id="CHEBI:136286"/>
        <dbReference type="ChEBI" id="CHEBI:194142"/>
    </reaction>
</comment>
<comment type="catalytic activity">
    <reaction evidence="2">
        <text>1,2,3-tri-(9Z)-hexadecenoylglycerol + 9-hydroxy-octadecanoate = 2,3-di-(9Z)-hexadecenoyl-sn-glycerol + 9-(9Z-hexadecenoyloxy)-octadecanoate</text>
        <dbReference type="Rhea" id="RHEA:75027"/>
        <dbReference type="ChEBI" id="CHEBI:75841"/>
        <dbReference type="ChEBI" id="CHEBI:75853"/>
        <dbReference type="ChEBI" id="CHEBI:136286"/>
        <dbReference type="ChEBI" id="CHEBI:136309"/>
    </reaction>
</comment>
<comment type="catalytic activity">
    <reaction evidence="2">
        <text>9-hydroxy-octadecanoate + 1,2-di-(9Z-octadecenoyl)-sn-glycerol = 9-(9Z-octadecenoyloxy)-octadecanoate + 2-(9Z-octadecenoyl)-glycerol</text>
        <dbReference type="Rhea" id="RHEA:75031"/>
        <dbReference type="ChEBI" id="CHEBI:52333"/>
        <dbReference type="ChEBI" id="CHEBI:73990"/>
        <dbReference type="ChEBI" id="CHEBI:136282"/>
        <dbReference type="ChEBI" id="CHEBI:136286"/>
    </reaction>
</comment>
<comment type="catalytic activity">
    <reaction evidence="2">
        <text>1-hexadecanoyl-2,3-di-(9Z)-octadecenoyl-sn-glycerol + 9-hydroxy-octadecanoate = 1-hexadecanoyl-3-(9Z)-octadecenoyl-sn-glycerol + 9-(9Z-octadecenoyloxy)-octadecanoate</text>
        <dbReference type="Rhea" id="RHEA:75035"/>
        <dbReference type="ChEBI" id="CHEBI:75847"/>
        <dbReference type="ChEBI" id="CHEBI:75868"/>
        <dbReference type="ChEBI" id="CHEBI:136282"/>
        <dbReference type="ChEBI" id="CHEBI:136286"/>
    </reaction>
</comment>
<comment type="pathway">
    <text>Glycerolipid metabolism; triacylglycerol degradation.</text>
</comment>
<comment type="subunit">
    <text evidence="1 2">Interacts with ABHD5; this association stimulates PNPLA2 triglyceride hydrolase activity. Interacts with SERPINF1; this interaction stimulates the phospholipase A2 activity of PNPLA2. Despite a colocalization in lipid droplets, it probably does not interact with PLIN. Interacts with PLIN5; prevents interaction with ABHD5. Interacts with FAF2.</text>
</comment>
<comment type="subcellular location">
    <subcellularLocation>
        <location evidence="2">Lipid droplet</location>
    </subcellularLocation>
    <subcellularLocation>
        <location evidence="2">Cell membrane</location>
        <topology evidence="3">Multi-pass membrane protein</topology>
    </subcellularLocation>
    <subcellularLocation>
        <location evidence="1">Cytoplasm</location>
    </subcellularLocation>
</comment>
<comment type="PTM">
    <text evidence="1">Phosphorylation at Ser-409 by PKA is increased during fasting and moderate intensity exercise, and moderately increases lipolytic activity.</text>
</comment>
<comment type="PTM">
    <text evidence="2">Ubiquitinated by PEX2 in response to reactive oxygen species (ROS), leading to its degradation (By similarity). Ubiquitination is stimulated by LDAH (By similarity).</text>
</comment>
<accession>Q2KI18</accession>
<feature type="chain" id="PRO_0000292526" description="Patatin-like phospholipase domain-containing protein 2">
    <location>
        <begin position="1"/>
        <end position="486"/>
    </location>
</feature>
<feature type="topological domain" description="Cytoplasmic" evidence="2">
    <location>
        <begin position="1"/>
        <end position="8"/>
    </location>
</feature>
<feature type="transmembrane region" description="Helical" evidence="3">
    <location>
        <begin position="9"/>
        <end position="29"/>
    </location>
</feature>
<feature type="topological domain" description="Extracellular" evidence="2">
    <location>
        <begin position="30"/>
        <end position="42"/>
    </location>
</feature>
<feature type="transmembrane region" description="Helical" evidence="3">
    <location>
        <begin position="43"/>
        <end position="63"/>
    </location>
</feature>
<feature type="topological domain" description="Cytoplasmic" evidence="2">
    <location>
        <begin position="64"/>
        <end position="137"/>
    </location>
</feature>
<feature type="transmembrane region" description="Helical" evidence="3">
    <location>
        <begin position="138"/>
        <end position="158"/>
    </location>
</feature>
<feature type="topological domain" description="Extracellular" evidence="2">
    <location>
        <begin position="159"/>
        <end position="334"/>
    </location>
</feature>
<feature type="transmembrane region" description="Helical" evidence="3">
    <location>
        <begin position="335"/>
        <end position="355"/>
    </location>
</feature>
<feature type="topological domain" description="Cytoplasmic" evidence="2">
    <location>
        <begin position="356"/>
        <end position="486"/>
    </location>
</feature>
<feature type="domain" description="PNPLA" evidence="4">
    <location>
        <begin position="10"/>
        <end position="179"/>
    </location>
</feature>
<feature type="short sequence motif" description="GXGXXG" evidence="4">
    <location>
        <begin position="14"/>
        <end position="19"/>
    </location>
</feature>
<feature type="short sequence motif" description="GXSXG" evidence="4">
    <location>
        <begin position="45"/>
        <end position="49"/>
    </location>
</feature>
<feature type="short sequence motif" description="DGA/G" evidence="4">
    <location>
        <begin position="166"/>
        <end position="168"/>
    </location>
</feature>
<feature type="active site" description="Nucleophile" evidence="4">
    <location>
        <position position="47"/>
    </location>
</feature>
<feature type="active site" description="Proton acceptor" evidence="4">
    <location>
        <position position="166"/>
    </location>
</feature>
<feature type="modified residue" description="Phosphoserine; in vitro" evidence="1">
    <location>
        <position position="377"/>
    </location>
</feature>
<feature type="modified residue" description="Phosphoserine; by PKA" evidence="1">
    <location>
        <position position="399"/>
    </location>
</feature>
<feature type="modified residue" description="Phosphoserine; by PKA" evidence="2">
    <location>
        <position position="409"/>
    </location>
</feature>
<feature type="modified residue" description="Phosphoserine; in vitro" evidence="1">
    <location>
        <position position="433"/>
    </location>
</feature>
<feature type="glycosylation site" description="N-linked (GlcNAc...) asparagine" evidence="3">
    <location>
        <position position="39"/>
    </location>
</feature>
<feature type="cross-link" description="Glycyl lysine isopeptide (Lys-Gly) (interchain with G-Cter in ubiquitin)" evidence="2">
    <location>
        <position position="92"/>
    </location>
</feature>
<keyword id="KW-1003">Cell membrane</keyword>
<keyword id="KW-0963">Cytoplasm</keyword>
<keyword id="KW-0325">Glycoprotein</keyword>
<keyword id="KW-0378">Hydrolase</keyword>
<keyword id="KW-1017">Isopeptide bond</keyword>
<keyword id="KW-0442">Lipid degradation</keyword>
<keyword id="KW-0551">Lipid droplet</keyword>
<keyword id="KW-0443">Lipid metabolism</keyword>
<keyword id="KW-0472">Membrane</keyword>
<keyword id="KW-0597">Phosphoprotein</keyword>
<keyword id="KW-1185">Reference proteome</keyword>
<keyword id="KW-0735">Signal-anchor</keyword>
<keyword id="KW-0812">Transmembrane</keyword>
<keyword id="KW-1133">Transmembrane helix</keyword>
<keyword id="KW-0832">Ubl conjugation</keyword>
<protein>
    <recommendedName>
        <fullName evidence="5">Patatin-like phospholipase domain-containing protein 2</fullName>
        <ecNumber evidence="2">3.1.1.3</ecNumber>
    </recommendedName>
    <alternativeName>
        <fullName>Adipose triglyceride lipase</fullName>
    </alternativeName>
    <alternativeName>
        <fullName evidence="2">Calcium-independent phospholipase A2-zeta</fullName>
        <shortName evidence="2">iPLA2-zeta</shortName>
        <ecNumber evidence="2">3.1.1.4</ecNumber>
    </alternativeName>
</protein>
<gene>
    <name type="primary">PNPLA2</name>
    <name type="synonym">ATGL</name>
</gene>
<reference key="1">
    <citation type="submission" date="2006-01" db="EMBL/GenBank/DDBJ databases">
        <authorList>
            <consortium name="NIH - Mammalian Gene Collection (MGC) project"/>
        </authorList>
    </citation>
    <scope>NUCLEOTIDE SEQUENCE [LARGE SCALE MRNA]</scope>
    <source>
        <strain>Hereford</strain>
        <tissue>Heart ventricle</tissue>
    </source>
</reference>
<proteinExistence type="evidence at transcript level"/>
<sequence length="486" mass="53417">MFPKETTWNISFAGCGFLGVYHIGVASCLREHAPFLVANATHIYGASAGALTATALVTGACLGEAGANIIEVSKEARKRFLGPLHPSFNMVKTIRGCLLKILPADCYECASGRLGISLTRVSDGENVIITHFNSKEELIQANVCSTFIPVYCGLIPPSLQGVRYVDGGISDNLPLYELKNTITVSPFSGESDICPQDSSTNIHELRVTNTSIQFNLRNLYRLSKALFPPEPLVLREMCKQGYRDGLRFLRRNGLLNRPNPLLALPPSQPPAPEDADAQEGAVAMERTGGKDHLPPPREDHILEHLPSRLNEALLEACMEPTDLLTTLSNMLPVRLAMAMMVPYTLPLESAVSFTIRLLEWLPDVPEDIRWMKEQTGSICQYLMIRAKRKLGNHLPSRLSGQVVLRRARSLPSVPLSCAAYSEVLPSWMRNSLSLGDVLAKWEECQRQLLLGLFCTNVAFPPDALRMRVPAGPAPEPPQHPPSSPPC</sequence>
<dbReference type="EC" id="3.1.1.3" evidence="2"/>
<dbReference type="EC" id="3.1.1.4" evidence="2"/>
<dbReference type="EMBL" id="BC112803">
    <property type="protein sequence ID" value="AAI12804.1"/>
    <property type="molecule type" value="mRNA"/>
</dbReference>
<dbReference type="RefSeq" id="NP_001039470.1">
    <property type="nucleotide sequence ID" value="NM_001046005.2"/>
</dbReference>
<dbReference type="SMR" id="Q2KI18"/>
<dbReference type="FunCoup" id="Q2KI18">
    <property type="interactions" value="211"/>
</dbReference>
<dbReference type="STRING" id="9913.ENSBTAP00000029866"/>
<dbReference type="GlyCosmos" id="Q2KI18">
    <property type="glycosylation" value="1 site, No reported glycans"/>
</dbReference>
<dbReference type="GlyGen" id="Q2KI18">
    <property type="glycosylation" value="1 site"/>
</dbReference>
<dbReference type="PaxDb" id="9913-ENSBTAP00000029866"/>
<dbReference type="GeneID" id="508493"/>
<dbReference type="KEGG" id="bta:508493"/>
<dbReference type="CTD" id="57104"/>
<dbReference type="eggNOG" id="KOG3773">
    <property type="taxonomic scope" value="Eukaryota"/>
</dbReference>
<dbReference type="InParanoid" id="Q2KI18"/>
<dbReference type="OrthoDB" id="197155at2759"/>
<dbReference type="BRENDA" id="3.1.1.3">
    <property type="organism ID" value="908"/>
</dbReference>
<dbReference type="UniPathway" id="UPA00256"/>
<dbReference type="Proteomes" id="UP000009136">
    <property type="component" value="Unplaced"/>
</dbReference>
<dbReference type="GO" id="GO:0005737">
    <property type="term" value="C:cytoplasm"/>
    <property type="evidence" value="ECO:0000250"/>
    <property type="project" value="UniProtKB"/>
</dbReference>
<dbReference type="GO" id="GO:0005811">
    <property type="term" value="C:lipid droplet"/>
    <property type="evidence" value="ECO:0000250"/>
    <property type="project" value="UniProtKB"/>
</dbReference>
<dbReference type="GO" id="GO:0016020">
    <property type="term" value="C:membrane"/>
    <property type="evidence" value="ECO:0000318"/>
    <property type="project" value="GO_Central"/>
</dbReference>
<dbReference type="GO" id="GO:0005886">
    <property type="term" value="C:plasma membrane"/>
    <property type="evidence" value="ECO:0007669"/>
    <property type="project" value="UniProtKB-SubCell"/>
</dbReference>
<dbReference type="GO" id="GO:0051265">
    <property type="term" value="F:diolein transacylation activity"/>
    <property type="evidence" value="ECO:0000250"/>
    <property type="project" value="UniProtKB"/>
</dbReference>
<dbReference type="GO" id="GO:0051264">
    <property type="term" value="F:mono-olein transacylation activity"/>
    <property type="evidence" value="ECO:0000250"/>
    <property type="project" value="UniProtKB"/>
</dbReference>
<dbReference type="GO" id="GO:0004623">
    <property type="term" value="F:phospholipase A2 activity"/>
    <property type="evidence" value="ECO:0000250"/>
    <property type="project" value="UniProtKB"/>
</dbReference>
<dbReference type="GO" id="GO:0050253">
    <property type="term" value="F:retinyl-palmitate esterase activity"/>
    <property type="evidence" value="ECO:0000250"/>
    <property type="project" value="UniProtKB"/>
</dbReference>
<dbReference type="GO" id="GO:0004806">
    <property type="term" value="F:triacylglycerol lipase activity"/>
    <property type="evidence" value="ECO:0000250"/>
    <property type="project" value="UniProtKB"/>
</dbReference>
<dbReference type="GO" id="GO:0006651">
    <property type="term" value="P:diacylglycerol biosynthetic process"/>
    <property type="evidence" value="ECO:0000250"/>
    <property type="project" value="UniProtKB"/>
</dbReference>
<dbReference type="GO" id="GO:0035356">
    <property type="term" value="P:intracellular triglyceride homeostasis"/>
    <property type="evidence" value="ECO:0000250"/>
    <property type="project" value="UniProtKB"/>
</dbReference>
<dbReference type="GO" id="GO:0160077">
    <property type="term" value="P:lipid droplet fusion"/>
    <property type="evidence" value="ECO:0000250"/>
    <property type="project" value="UniProtKB"/>
</dbReference>
<dbReference type="GO" id="GO:0055088">
    <property type="term" value="P:lipid homeostasis"/>
    <property type="evidence" value="ECO:0000318"/>
    <property type="project" value="GO_Central"/>
</dbReference>
<dbReference type="GO" id="GO:0010891">
    <property type="term" value="P:negative regulation of triglyceride storage"/>
    <property type="evidence" value="ECO:0000250"/>
    <property type="project" value="UniProtKB"/>
</dbReference>
<dbReference type="GO" id="GO:0010898">
    <property type="term" value="P:positive regulation of triglyceride catabolic process"/>
    <property type="evidence" value="ECO:0000250"/>
    <property type="project" value="UniProtKB"/>
</dbReference>
<dbReference type="GO" id="GO:0019433">
    <property type="term" value="P:triglyceride catabolic process"/>
    <property type="evidence" value="ECO:0000250"/>
    <property type="project" value="UniProtKB"/>
</dbReference>
<dbReference type="CDD" id="cd07220">
    <property type="entry name" value="Pat_PNPLA2"/>
    <property type="match status" value="1"/>
</dbReference>
<dbReference type="FunFam" id="3.40.1090.10:FF:000021">
    <property type="entry name" value="Patatin-like phospholipase domain containing 2"/>
    <property type="match status" value="1"/>
</dbReference>
<dbReference type="FunFam" id="3.40.1090.10:FF:000003">
    <property type="entry name" value="Patatin-like phospholipase domain-containing protein 2"/>
    <property type="match status" value="1"/>
</dbReference>
<dbReference type="Gene3D" id="3.40.1090.10">
    <property type="entry name" value="Cytosolic phospholipase A2 catalytic domain"/>
    <property type="match status" value="2"/>
</dbReference>
<dbReference type="InterPro" id="IPR016035">
    <property type="entry name" value="Acyl_Trfase/lysoPLipase"/>
</dbReference>
<dbReference type="InterPro" id="IPR033562">
    <property type="entry name" value="PLPL"/>
</dbReference>
<dbReference type="InterPro" id="IPR033903">
    <property type="entry name" value="PNPLA2"/>
</dbReference>
<dbReference type="InterPro" id="IPR002641">
    <property type="entry name" value="PNPLA_dom"/>
</dbReference>
<dbReference type="PANTHER" id="PTHR12406">
    <property type="entry name" value="CALCIUM-INDEPENDENT PHOSPHOLIPASE A2 IPLA2 -RELATED"/>
    <property type="match status" value="1"/>
</dbReference>
<dbReference type="PANTHER" id="PTHR12406:SF29">
    <property type="entry name" value="PATATIN-LIKE PHOSPHOLIPASE DOMAIN-CONTAINING PROTEIN 2"/>
    <property type="match status" value="1"/>
</dbReference>
<dbReference type="Pfam" id="PF01734">
    <property type="entry name" value="Patatin"/>
    <property type="match status" value="1"/>
</dbReference>
<dbReference type="SUPFAM" id="SSF52151">
    <property type="entry name" value="FabD/lysophospholipase-like"/>
    <property type="match status" value="1"/>
</dbReference>
<dbReference type="PROSITE" id="PS51635">
    <property type="entry name" value="PNPLA"/>
    <property type="match status" value="1"/>
</dbReference>
<organism>
    <name type="scientific">Bos taurus</name>
    <name type="common">Bovine</name>
    <dbReference type="NCBI Taxonomy" id="9913"/>
    <lineage>
        <taxon>Eukaryota</taxon>
        <taxon>Metazoa</taxon>
        <taxon>Chordata</taxon>
        <taxon>Craniata</taxon>
        <taxon>Vertebrata</taxon>
        <taxon>Euteleostomi</taxon>
        <taxon>Mammalia</taxon>
        <taxon>Eutheria</taxon>
        <taxon>Laurasiatheria</taxon>
        <taxon>Artiodactyla</taxon>
        <taxon>Ruminantia</taxon>
        <taxon>Pecora</taxon>
        <taxon>Bovidae</taxon>
        <taxon>Bovinae</taxon>
        <taxon>Bos</taxon>
    </lineage>
</organism>
<name>PLPL2_BOVIN</name>
<evidence type="ECO:0000250" key="1">
    <source>
        <dbReference type="UniProtKB" id="Q8BJ56"/>
    </source>
</evidence>
<evidence type="ECO:0000250" key="2">
    <source>
        <dbReference type="UniProtKB" id="Q96AD5"/>
    </source>
</evidence>
<evidence type="ECO:0000255" key="3"/>
<evidence type="ECO:0000255" key="4">
    <source>
        <dbReference type="PROSITE-ProRule" id="PRU01161"/>
    </source>
</evidence>
<evidence type="ECO:0000305" key="5"/>